<comment type="function">
    <text evidence="1">Antimicrobial protein that is an integral component of the innate immune system (By similarity). Binds to bacterial lipopolysaccharides (LPS) (By similarity). Acts via neutrophil N-formyl peptide receptors to enhance the release of CXCL2 (By similarity). Postsecretory processing generates multiple cathelicidin antimicrobial peptides with various lengths which act as a topical antimicrobial defense in sweat on skin (By similarity). The unprocessed precursor form, cathelicidin antimicrobial peptide, inhibits the growth of Gram-negative E.coli and E.aerogenes with efficiencies comparable to that of the mature peptide LL-37 (in vitro) (By similarity).</text>
</comment>
<comment type="function">
    <molecule>Antibacterial peptide LL-37</molecule>
    <text evidence="1">Antimicrobial peptide that is an integral component of the innate immune system (By similarity). Binds to bacterial lipopolysaccharides (LPS) (By similarity). Causes membrane permeabilization by forming transmembrane pores (in vitro) (By similarity). Causes lysis of E.coli (By similarity). Exhibits antimicrobial activity against Gram-negative bacteria such as P.aeruginosa, S.typhimurium, E.aerogenes, E.coli and P.syringae, Gram-positive bacteria such as L.monocytogenes, S.epidermidis, S.pyogenes and S.aureus, as well as vancomycin-resistant enterococci (in vitro) (By similarity). Exhibits antimicrobial activity against methicillin-resistant S.aureus, P.mirabilis, and C.albicans in low-salt media, but not in media containing 100 mM NaCl (in vitro) (By similarity). Forms chiral supramolecular assemblies with quinolone signal (PQS) molecules of P.aeruginosa, which may lead to interference of bacterial quorum signaling and perturbance of bacterial biofilm formation (By similarity). May form supramolecular fiber-like assemblies on bacterial membranes (By similarity). Induces cytokine and chemokine producation as well as TNF/TNFA and CSF2/GMCSF production in normal human keratinocytes (By similarity). Exhibits hemolytic activity against red blood cells (By similarity).</text>
</comment>
<comment type="function">
    <molecule>Antibacterial peptide FALL-39</molecule>
    <text evidence="1">Exhibits antimicrobial activity against E.coli and B.megaterium (in vitro).</text>
</comment>
<comment type="subunit">
    <molecule>Antibacterial peptide LL-37</molecule>
    <text evidence="1">Monomer, homodimer or homotrimer (in vitro) (By similarity). Oligomerizes as tetra- or hexamer in solution (in vitro) (By similarity).</text>
</comment>
<comment type="subcellular location">
    <subcellularLocation>
        <location evidence="2">Secreted</location>
    </subcellularLocation>
    <subcellularLocation>
        <location evidence="2">Vesicle</location>
    </subcellularLocation>
    <text evidence="2">Stored as pro-peptide in granules and phagolysosomes of neutrophils (By similarity). Secreted in sweat onto skin (By similarity).</text>
</comment>
<comment type="domain">
    <text evidence="2">The cathelin-like domain (CLD), which is the propeptide part, does not seem to exhibit auto-inhibitory function, as it does not inhibit the antibacterial activity of antibacterial peptide LL-37.</text>
</comment>
<comment type="domain">
    <molecule>Antibacterial peptide LL-37</molecule>
    <text evidence="2">Undergoes conformational change in the presence of lipid A, transitioning from a random coil to an alpha-helical structure.</text>
</comment>
<comment type="domain">
    <molecule>Antibacterial peptide LL-37</molecule>
    <text evidence="2">Residues 17-29 of LL-37 represent the active core of the antimicrobial peptide. Forms ribbon-like fibrils and exhibits antibacterial activity against Gram-positive M.luteus (By similarity). Also exhibits antibacterial activity against Gram-negative E.coli and P.fluorescens (By similarity).</text>
</comment>
<comment type="PTM">
    <text evidence="1">Proteolytically cleaved by proteinase PRTN3 into antibacterial peptide LL-37 (By similarity). Proteolytically cleaved by cathepsin CTSG and neutrophil elastase ELANE (By similarity).</text>
</comment>
<comment type="PTM">
    <molecule>Antibacterial peptide LL-37</molecule>
    <text evidence="1">Resistant to proteolytic degradation in solution, and when bound to both zwitterionic (mimicking mammalian membranes) and negatively charged membranes (mimicking bacterial membranes).</text>
</comment>
<comment type="PTM">
    <text evidence="1">After secretion onto the skin surface, the CAMP gene product is processed by a serine protease-dependent mechanism into multiple novel antimicrobial peptides distinct from and shorter than cathelicidin LL-37 (By similarity). These peptides show enhanced antimicrobial action, acquiring the ability to kill skin pathogens such as S.aureus, E.coli and C.albicans. These peptides have lost the ability to stimulate CXCL8/IL8 release from keratinocytes (By similarity). The peptides act synergistically, killing bacteria at lower concentrations when present together, and maintain activity at increased salt condition (By similarity).</text>
</comment>
<comment type="similarity">
    <text evidence="4">Belongs to the cathelicidin family.</text>
</comment>
<accession>Q1KLX1</accession>
<name>CAMP_PANTR</name>
<evidence type="ECO:0000250" key="1">
    <source>
        <dbReference type="UniProtKB" id="P49913"/>
    </source>
</evidence>
<evidence type="ECO:0000250" key="2">
    <source>
        <dbReference type="UniProtKB" id="P54229"/>
    </source>
</evidence>
<evidence type="ECO:0000255" key="3"/>
<evidence type="ECO:0000305" key="4"/>
<proteinExistence type="inferred from homology"/>
<protein>
    <recommendedName>
        <fullName evidence="1">Cathelicidin antimicrobial peptide</fullName>
    </recommendedName>
    <component>
        <recommendedName>
            <fullName evidence="1">Antibacterial peptide FALL-39</fullName>
        </recommendedName>
        <alternativeName>
            <fullName evidence="1">FALL-39 peptide antibiotic</fullName>
        </alternativeName>
    </component>
    <component>
        <recommendedName>
            <fullName evidence="1">Antibacterial peptide LL-37</fullName>
        </recommendedName>
    </component>
</protein>
<feature type="signal peptide" evidence="3">
    <location>
        <begin position="1"/>
        <end position="30"/>
    </location>
</feature>
<feature type="propeptide" id="PRO_0000251776" description="Cathelin-like domain (CLD)" evidence="1">
    <location>
        <begin position="31"/>
        <end position="131"/>
    </location>
</feature>
<feature type="peptide" id="PRO_0000251777" description="Antibacterial peptide FALL-39">
    <location>
        <begin position="132"/>
        <end position="170"/>
    </location>
</feature>
<feature type="peptide" id="PRO_0000251778" description="Antibacterial peptide LL-37">
    <location>
        <begin position="134"/>
        <end position="170"/>
    </location>
</feature>
<feature type="region of interest" description="Active core" evidence="1">
    <location>
        <begin position="150"/>
        <end position="162"/>
    </location>
</feature>
<feature type="disulfide bond" evidence="1">
    <location>
        <begin position="86"/>
        <end position="97"/>
    </location>
</feature>
<feature type="disulfide bond" evidence="1">
    <location>
        <begin position="108"/>
        <end position="125"/>
    </location>
</feature>
<keyword id="KW-0044">Antibiotic</keyword>
<keyword id="KW-0929">Antimicrobial</keyword>
<keyword id="KW-0165">Cleavage on pair of basic residues</keyword>
<keyword id="KW-1015">Disulfide bond</keyword>
<keyword id="KW-0391">Immunity</keyword>
<keyword id="KW-0399">Innate immunity</keyword>
<keyword id="KW-1185">Reference proteome</keyword>
<keyword id="KW-0964">Secreted</keyword>
<keyword id="KW-0732">Signal</keyword>
<dbReference type="EMBL" id="DQ471371">
    <property type="protein sequence ID" value="ABE96635.1"/>
    <property type="molecule type" value="Genomic_DNA"/>
</dbReference>
<dbReference type="RefSeq" id="NP_001065283.1">
    <property type="nucleotide sequence ID" value="NM_001071815.1"/>
</dbReference>
<dbReference type="BMRB" id="Q1KLX1"/>
<dbReference type="SMR" id="Q1KLX1"/>
<dbReference type="FunCoup" id="Q1KLX1">
    <property type="interactions" value="271"/>
</dbReference>
<dbReference type="STRING" id="9598.ENSPTRP00000025671"/>
<dbReference type="PaxDb" id="9598-ENSPTRP00000025671"/>
<dbReference type="GeneID" id="741881"/>
<dbReference type="KEGG" id="ptr:741881"/>
<dbReference type="CTD" id="820"/>
<dbReference type="eggNOG" id="ENOG502SAES">
    <property type="taxonomic scope" value="Eukaryota"/>
</dbReference>
<dbReference type="HOGENOM" id="CLU_121724_1_1_1"/>
<dbReference type="InParanoid" id="Q1KLX1"/>
<dbReference type="OrthoDB" id="11313at9604"/>
<dbReference type="TreeFam" id="TF338457"/>
<dbReference type="Proteomes" id="UP000002277">
    <property type="component" value="Unplaced"/>
</dbReference>
<dbReference type="GO" id="GO:0005615">
    <property type="term" value="C:extracellular space"/>
    <property type="evidence" value="ECO:0000318"/>
    <property type="project" value="GO_Central"/>
</dbReference>
<dbReference type="GO" id="GO:0031982">
    <property type="term" value="C:vesicle"/>
    <property type="evidence" value="ECO:0007669"/>
    <property type="project" value="UniProtKB-SubCell"/>
</dbReference>
<dbReference type="GO" id="GO:0001530">
    <property type="term" value="F:lipopolysaccharide binding"/>
    <property type="evidence" value="ECO:0000318"/>
    <property type="project" value="GO_Central"/>
</dbReference>
<dbReference type="GO" id="GO:0061844">
    <property type="term" value="P:antimicrobial humoral immune response mediated by antimicrobial peptide"/>
    <property type="evidence" value="ECO:0000318"/>
    <property type="project" value="GO_Central"/>
</dbReference>
<dbReference type="GO" id="GO:0050829">
    <property type="term" value="P:defense response to Gram-negative bacterium"/>
    <property type="evidence" value="ECO:0000318"/>
    <property type="project" value="GO_Central"/>
</dbReference>
<dbReference type="GO" id="GO:0050830">
    <property type="term" value="P:defense response to Gram-positive bacterium"/>
    <property type="evidence" value="ECO:0000318"/>
    <property type="project" value="GO_Central"/>
</dbReference>
<dbReference type="GO" id="GO:0045087">
    <property type="term" value="P:innate immune response"/>
    <property type="evidence" value="ECO:0000318"/>
    <property type="project" value="GO_Central"/>
</dbReference>
<dbReference type="GO" id="GO:0042119">
    <property type="term" value="P:neutrophil activation"/>
    <property type="evidence" value="ECO:0000250"/>
    <property type="project" value="UniProtKB"/>
</dbReference>
<dbReference type="FunFam" id="3.10.450.10:FF:000003">
    <property type="entry name" value="Cathelicidin antimicrobial peptide"/>
    <property type="match status" value="1"/>
</dbReference>
<dbReference type="Gene3D" id="3.10.450.10">
    <property type="match status" value="1"/>
</dbReference>
<dbReference type="InterPro" id="IPR001894">
    <property type="entry name" value="Cathelicidin-like"/>
</dbReference>
<dbReference type="InterPro" id="IPR018216">
    <property type="entry name" value="Cathelicidin_CS"/>
</dbReference>
<dbReference type="InterPro" id="IPR022746">
    <property type="entry name" value="Cathlecidin_C"/>
</dbReference>
<dbReference type="InterPro" id="IPR046350">
    <property type="entry name" value="Cystatin_sf"/>
</dbReference>
<dbReference type="PANTHER" id="PTHR10206">
    <property type="entry name" value="CATHELICIDIN"/>
    <property type="match status" value="1"/>
</dbReference>
<dbReference type="PANTHER" id="PTHR10206:SF2">
    <property type="entry name" value="CATHELICIDIN ANTIMICROBIAL PEPTIDE"/>
    <property type="match status" value="1"/>
</dbReference>
<dbReference type="Pfam" id="PF12153">
    <property type="entry name" value="CAP18_C"/>
    <property type="match status" value="1"/>
</dbReference>
<dbReference type="Pfam" id="PF00666">
    <property type="entry name" value="Cathelicidins"/>
    <property type="match status" value="1"/>
</dbReference>
<dbReference type="SUPFAM" id="SSF54403">
    <property type="entry name" value="Cystatin/monellin"/>
    <property type="match status" value="1"/>
</dbReference>
<dbReference type="PROSITE" id="PS00946">
    <property type="entry name" value="CATHELICIDINS_1"/>
    <property type="match status" value="1"/>
</dbReference>
<dbReference type="PROSITE" id="PS00947">
    <property type="entry name" value="CATHELICIDINS_2"/>
    <property type="match status" value="1"/>
</dbReference>
<organism>
    <name type="scientific">Pan troglodytes</name>
    <name type="common">Chimpanzee</name>
    <dbReference type="NCBI Taxonomy" id="9598"/>
    <lineage>
        <taxon>Eukaryota</taxon>
        <taxon>Metazoa</taxon>
        <taxon>Chordata</taxon>
        <taxon>Craniata</taxon>
        <taxon>Vertebrata</taxon>
        <taxon>Euteleostomi</taxon>
        <taxon>Mammalia</taxon>
        <taxon>Eutheria</taxon>
        <taxon>Euarchontoglires</taxon>
        <taxon>Primates</taxon>
        <taxon>Haplorrhini</taxon>
        <taxon>Catarrhini</taxon>
        <taxon>Hominidae</taxon>
        <taxon>Pan</taxon>
    </lineage>
</organism>
<reference key="1">
    <citation type="journal article" date="2006" name="J. Biol. Chem.">
        <title>Evolution of the primate cathelicidin. Correlation between structural variations and antimicrobial activity.</title>
        <authorList>
            <person name="Zelezetsky I."/>
            <person name="Pontillo A."/>
            <person name="Puzzi L."/>
            <person name="Antcheva N."/>
            <person name="Segat L."/>
            <person name="Pacor S."/>
            <person name="Crovella S."/>
            <person name="Tossi A."/>
        </authorList>
    </citation>
    <scope>NUCLEOTIDE SEQUENCE [GENOMIC DNA]</scope>
</reference>
<gene>
    <name evidence="1" type="primary">CAMP</name>
</gene>
<sequence>MKTQRDGHSLGRWSLVLLLLGLVMPLAIVAQVLSYKEAVLRAIDGINQRSSDANLYRLLDLDPRPTMDGDPDTPKPVSFTVKETVCPRTTQQSPEDCDFKKDGLVKRCMGTVTLNQARGSFDISCDKDNKRFALLGDFFRKSKEKIGKEFKRIVQRIKDFLRNLVPRTES</sequence>